<feature type="chain" id="PRO_0000236376" description="Thiazole synthase">
    <location>
        <begin position="1"/>
        <end position="264"/>
    </location>
</feature>
<feature type="active site" description="Schiff-base intermediate with DXP" evidence="1">
    <location>
        <position position="106"/>
    </location>
</feature>
<feature type="binding site" evidence="1">
    <location>
        <position position="167"/>
    </location>
    <ligand>
        <name>1-deoxy-D-xylulose 5-phosphate</name>
        <dbReference type="ChEBI" id="CHEBI:57792"/>
    </ligand>
</feature>
<feature type="binding site" evidence="1">
    <location>
        <begin position="193"/>
        <end position="194"/>
    </location>
    <ligand>
        <name>1-deoxy-D-xylulose 5-phosphate</name>
        <dbReference type="ChEBI" id="CHEBI:57792"/>
    </ligand>
</feature>
<feature type="binding site" evidence="1">
    <location>
        <begin position="215"/>
        <end position="216"/>
    </location>
    <ligand>
        <name>1-deoxy-D-xylulose 5-phosphate</name>
        <dbReference type="ChEBI" id="CHEBI:57792"/>
    </ligand>
</feature>
<comment type="function">
    <text evidence="1">Catalyzes the rearrangement of 1-deoxy-D-xylulose 5-phosphate (DXP) to produce the thiazole phosphate moiety of thiamine. Sulfur is provided by the thiocarboxylate moiety of the carrier protein ThiS. In vitro, sulfur can be provided by H(2)S.</text>
</comment>
<comment type="catalytic activity">
    <reaction evidence="1">
        <text>[ThiS sulfur-carrier protein]-C-terminal-Gly-aminoethanethioate + 2-iminoacetate + 1-deoxy-D-xylulose 5-phosphate = [ThiS sulfur-carrier protein]-C-terminal Gly-Gly + 2-[(2R,5Z)-2-carboxy-4-methylthiazol-5(2H)-ylidene]ethyl phosphate + 2 H2O + H(+)</text>
        <dbReference type="Rhea" id="RHEA:26297"/>
        <dbReference type="Rhea" id="RHEA-COMP:12909"/>
        <dbReference type="Rhea" id="RHEA-COMP:19908"/>
        <dbReference type="ChEBI" id="CHEBI:15377"/>
        <dbReference type="ChEBI" id="CHEBI:15378"/>
        <dbReference type="ChEBI" id="CHEBI:57792"/>
        <dbReference type="ChEBI" id="CHEBI:62899"/>
        <dbReference type="ChEBI" id="CHEBI:77846"/>
        <dbReference type="ChEBI" id="CHEBI:90778"/>
        <dbReference type="ChEBI" id="CHEBI:232372"/>
        <dbReference type="EC" id="2.8.1.10"/>
    </reaction>
</comment>
<comment type="pathway">
    <text evidence="1">Cofactor biosynthesis; thiamine diphosphate biosynthesis.</text>
</comment>
<comment type="subunit">
    <text evidence="1">Homotetramer. Forms heterodimers with either ThiH or ThiS.</text>
</comment>
<comment type="subcellular location">
    <subcellularLocation>
        <location evidence="1">Cytoplasm</location>
    </subcellularLocation>
</comment>
<comment type="similarity">
    <text evidence="1">Belongs to the ThiG family.</text>
</comment>
<proteinExistence type="inferred from homology"/>
<organism>
    <name type="scientific">Xanthomonas campestris pv. campestris (strain 8004)</name>
    <dbReference type="NCBI Taxonomy" id="314565"/>
    <lineage>
        <taxon>Bacteria</taxon>
        <taxon>Pseudomonadati</taxon>
        <taxon>Pseudomonadota</taxon>
        <taxon>Gammaproteobacteria</taxon>
        <taxon>Lysobacterales</taxon>
        <taxon>Lysobacteraceae</taxon>
        <taxon>Xanthomonas</taxon>
    </lineage>
</organism>
<name>THIG_XANC8</name>
<gene>
    <name evidence="1" type="primary">thiG</name>
    <name type="ordered locus">XC_1015</name>
</gene>
<protein>
    <recommendedName>
        <fullName evidence="1">Thiazole synthase</fullName>
        <ecNumber evidence="1">2.8.1.10</ecNumber>
    </recommendedName>
</protein>
<reference key="1">
    <citation type="journal article" date="2005" name="Genome Res.">
        <title>Comparative and functional genomic analyses of the pathogenicity of phytopathogen Xanthomonas campestris pv. campestris.</title>
        <authorList>
            <person name="Qian W."/>
            <person name="Jia Y."/>
            <person name="Ren S.-X."/>
            <person name="He Y.-Q."/>
            <person name="Feng J.-X."/>
            <person name="Lu L.-F."/>
            <person name="Sun Q."/>
            <person name="Ying G."/>
            <person name="Tang D.-J."/>
            <person name="Tang H."/>
            <person name="Wu W."/>
            <person name="Hao P."/>
            <person name="Wang L."/>
            <person name="Jiang B.-L."/>
            <person name="Zeng S."/>
            <person name="Gu W.-Y."/>
            <person name="Lu G."/>
            <person name="Rong L."/>
            <person name="Tian Y."/>
            <person name="Yao Z."/>
            <person name="Fu G."/>
            <person name="Chen B."/>
            <person name="Fang R."/>
            <person name="Qiang B."/>
            <person name="Chen Z."/>
            <person name="Zhao G.-P."/>
            <person name="Tang J.-L."/>
            <person name="He C."/>
        </authorList>
    </citation>
    <scope>NUCLEOTIDE SEQUENCE [LARGE SCALE GENOMIC DNA]</scope>
    <source>
        <strain>8004</strain>
    </source>
</reference>
<accession>Q4UXY4</accession>
<dbReference type="EC" id="2.8.1.10" evidence="1"/>
<dbReference type="EMBL" id="CP000050">
    <property type="protein sequence ID" value="AAY48089.1"/>
    <property type="molecule type" value="Genomic_DNA"/>
</dbReference>
<dbReference type="RefSeq" id="WP_011038257.1">
    <property type="nucleotide sequence ID" value="NZ_CP155948.1"/>
</dbReference>
<dbReference type="SMR" id="Q4UXY4"/>
<dbReference type="KEGG" id="xcb:XC_1015"/>
<dbReference type="HOGENOM" id="CLU_062233_1_0_6"/>
<dbReference type="UniPathway" id="UPA00060"/>
<dbReference type="Proteomes" id="UP000000420">
    <property type="component" value="Chromosome"/>
</dbReference>
<dbReference type="GO" id="GO:0005737">
    <property type="term" value="C:cytoplasm"/>
    <property type="evidence" value="ECO:0007669"/>
    <property type="project" value="UniProtKB-SubCell"/>
</dbReference>
<dbReference type="GO" id="GO:1990107">
    <property type="term" value="F:thiazole synthase activity"/>
    <property type="evidence" value="ECO:0007669"/>
    <property type="project" value="UniProtKB-EC"/>
</dbReference>
<dbReference type="GO" id="GO:0009229">
    <property type="term" value="P:thiamine diphosphate biosynthetic process"/>
    <property type="evidence" value="ECO:0007669"/>
    <property type="project" value="UniProtKB-UniRule"/>
</dbReference>
<dbReference type="CDD" id="cd04728">
    <property type="entry name" value="ThiG"/>
    <property type="match status" value="1"/>
</dbReference>
<dbReference type="FunFam" id="3.20.20.70:FF:000049">
    <property type="entry name" value="Thiazole synthase"/>
    <property type="match status" value="1"/>
</dbReference>
<dbReference type="Gene3D" id="3.20.20.70">
    <property type="entry name" value="Aldolase class I"/>
    <property type="match status" value="1"/>
</dbReference>
<dbReference type="HAMAP" id="MF_00443">
    <property type="entry name" value="ThiG"/>
    <property type="match status" value="1"/>
</dbReference>
<dbReference type="InterPro" id="IPR013785">
    <property type="entry name" value="Aldolase_TIM"/>
</dbReference>
<dbReference type="InterPro" id="IPR033983">
    <property type="entry name" value="Thiazole_synthase_ThiG"/>
</dbReference>
<dbReference type="InterPro" id="IPR008867">
    <property type="entry name" value="ThiG"/>
</dbReference>
<dbReference type="PANTHER" id="PTHR34266">
    <property type="entry name" value="THIAZOLE SYNTHASE"/>
    <property type="match status" value="1"/>
</dbReference>
<dbReference type="PANTHER" id="PTHR34266:SF2">
    <property type="entry name" value="THIAZOLE SYNTHASE"/>
    <property type="match status" value="1"/>
</dbReference>
<dbReference type="Pfam" id="PF05690">
    <property type="entry name" value="ThiG"/>
    <property type="match status" value="1"/>
</dbReference>
<dbReference type="SUPFAM" id="SSF110399">
    <property type="entry name" value="ThiG-like"/>
    <property type="match status" value="1"/>
</dbReference>
<evidence type="ECO:0000255" key="1">
    <source>
        <dbReference type="HAMAP-Rule" id="MF_00443"/>
    </source>
</evidence>
<sequence length="264" mass="27914">MTLSAPSDALVIAGKPYRSRLLTGTGKFKDLDETRLATEAAAAQIVTVAIRRVNIGQDPNAPSLLDVLPPDRYTLLPNTAGCYTAEDAVRTCRLARELLDGHNLTKLEVLGDERTLYPDVVQTLKAAEQLVADGFEVMVYTSDDPILAKRLEEIGCVAVMPLAAPIGSGLGIQNKYNLLEIIENAKVPIIVDAGVGTASDAAIAMELGCDGVLMNTAIAGARDPILMASAMRKAIEAGREAFLAGRIPRKRYASASSPVDGVIG</sequence>
<keyword id="KW-0963">Cytoplasm</keyword>
<keyword id="KW-0704">Schiff base</keyword>
<keyword id="KW-0784">Thiamine biosynthesis</keyword>
<keyword id="KW-0808">Transferase</keyword>